<protein>
    <recommendedName>
        <fullName>Protein S100-A1</fullName>
    </recommendedName>
    <alternativeName>
        <fullName>S-100 protein alpha chain</fullName>
    </alternativeName>
    <alternativeName>
        <fullName>S-100 protein subunit alpha</fullName>
    </alternativeName>
    <alternativeName>
        <fullName>S100 calcium-binding protein A1</fullName>
    </alternativeName>
</protein>
<dbReference type="EMBL" id="CR858445">
    <property type="protein sequence ID" value="CAH90674.1"/>
    <property type="molecule type" value="mRNA"/>
</dbReference>
<dbReference type="RefSeq" id="NP_001127319.1">
    <property type="nucleotide sequence ID" value="NM_001133847.2"/>
</dbReference>
<dbReference type="BMRB" id="Q5RC36"/>
<dbReference type="SMR" id="Q5RC36"/>
<dbReference type="FunCoup" id="Q5RC36">
    <property type="interactions" value="412"/>
</dbReference>
<dbReference type="STRING" id="9601.ENSPPYP00000000938"/>
<dbReference type="GeneID" id="100174380"/>
<dbReference type="KEGG" id="pon:100174380"/>
<dbReference type="CTD" id="6271"/>
<dbReference type="eggNOG" id="ENOG502SSF0">
    <property type="taxonomic scope" value="Eukaryota"/>
</dbReference>
<dbReference type="HOGENOM" id="CLU_138624_0_0_1"/>
<dbReference type="InParanoid" id="Q5RC36"/>
<dbReference type="OrthoDB" id="8442111at2759"/>
<dbReference type="Proteomes" id="UP000001595">
    <property type="component" value="Unplaced"/>
</dbReference>
<dbReference type="GO" id="GO:0005739">
    <property type="term" value="C:mitochondrion"/>
    <property type="evidence" value="ECO:0007669"/>
    <property type="project" value="UniProtKB-SubCell"/>
</dbReference>
<dbReference type="GO" id="GO:0016529">
    <property type="term" value="C:sarcoplasmic reticulum"/>
    <property type="evidence" value="ECO:0007669"/>
    <property type="project" value="UniProtKB-SubCell"/>
</dbReference>
<dbReference type="GO" id="GO:0005509">
    <property type="term" value="F:calcium ion binding"/>
    <property type="evidence" value="ECO:0007669"/>
    <property type="project" value="InterPro"/>
</dbReference>
<dbReference type="GO" id="GO:0048306">
    <property type="term" value="F:calcium-dependent protein binding"/>
    <property type="evidence" value="ECO:0007669"/>
    <property type="project" value="TreeGrafter"/>
</dbReference>
<dbReference type="GO" id="GO:0044548">
    <property type="term" value="F:S100 protein binding"/>
    <property type="evidence" value="ECO:0007669"/>
    <property type="project" value="TreeGrafter"/>
</dbReference>
<dbReference type="GO" id="GO:0008016">
    <property type="term" value="P:regulation of heart contraction"/>
    <property type="evidence" value="ECO:0007669"/>
    <property type="project" value="InterPro"/>
</dbReference>
<dbReference type="CDD" id="cd05025">
    <property type="entry name" value="S-100A1"/>
    <property type="match status" value="1"/>
</dbReference>
<dbReference type="FunFam" id="1.10.238.10:FF:000044">
    <property type="entry name" value="Protein S100"/>
    <property type="match status" value="1"/>
</dbReference>
<dbReference type="Gene3D" id="1.10.238.10">
    <property type="entry name" value="EF-hand"/>
    <property type="match status" value="1"/>
</dbReference>
<dbReference type="InterPro" id="IPR011992">
    <property type="entry name" value="EF-hand-dom_pair"/>
</dbReference>
<dbReference type="InterPro" id="IPR018247">
    <property type="entry name" value="EF_Hand_1_Ca_BS"/>
</dbReference>
<dbReference type="InterPro" id="IPR002048">
    <property type="entry name" value="EF_hand_dom"/>
</dbReference>
<dbReference type="InterPro" id="IPR028486">
    <property type="entry name" value="S100-A1"/>
</dbReference>
<dbReference type="InterPro" id="IPR001751">
    <property type="entry name" value="S100/CaBP7/8-like_CS"/>
</dbReference>
<dbReference type="InterPro" id="IPR013787">
    <property type="entry name" value="S100_Ca-bd_sub"/>
</dbReference>
<dbReference type="PANTHER" id="PTHR11639:SF134">
    <property type="entry name" value="PROTEIN S100-A1-RELATED"/>
    <property type="match status" value="1"/>
</dbReference>
<dbReference type="PANTHER" id="PTHR11639">
    <property type="entry name" value="S100 CALCIUM-BINDING PROTEIN"/>
    <property type="match status" value="1"/>
</dbReference>
<dbReference type="Pfam" id="PF00036">
    <property type="entry name" value="EF-hand_1"/>
    <property type="match status" value="1"/>
</dbReference>
<dbReference type="Pfam" id="PF01023">
    <property type="entry name" value="S_100"/>
    <property type="match status" value="1"/>
</dbReference>
<dbReference type="SMART" id="SM00054">
    <property type="entry name" value="EFh"/>
    <property type="match status" value="1"/>
</dbReference>
<dbReference type="SMART" id="SM01394">
    <property type="entry name" value="S_100"/>
    <property type="match status" value="1"/>
</dbReference>
<dbReference type="SUPFAM" id="SSF47473">
    <property type="entry name" value="EF-hand"/>
    <property type="match status" value="1"/>
</dbReference>
<dbReference type="PROSITE" id="PS00018">
    <property type="entry name" value="EF_HAND_1"/>
    <property type="match status" value="1"/>
</dbReference>
<dbReference type="PROSITE" id="PS50222">
    <property type="entry name" value="EF_HAND_2"/>
    <property type="match status" value="1"/>
</dbReference>
<dbReference type="PROSITE" id="PS00303">
    <property type="entry name" value="S100_CABP"/>
    <property type="match status" value="1"/>
</dbReference>
<feature type="chain" id="PRO_0000236020" description="Protein S100-A1">
    <location>
        <begin position="1"/>
        <end position="94"/>
    </location>
</feature>
<feature type="domain" description="EF-hand 1" evidence="6">
    <location>
        <begin position="13"/>
        <end position="48"/>
    </location>
</feature>
<feature type="domain" description="EF-hand 2" evidence="5">
    <location>
        <begin position="50"/>
        <end position="85"/>
    </location>
</feature>
<feature type="binding site" evidence="3">
    <location>
        <position position="28"/>
    </location>
    <ligand>
        <name>Ca(2+)</name>
        <dbReference type="ChEBI" id="CHEBI:29108"/>
        <label>1</label>
        <note>low affinity</note>
    </ligand>
</feature>
<feature type="binding site" evidence="3">
    <location>
        <position position="33"/>
    </location>
    <ligand>
        <name>Ca(2+)</name>
        <dbReference type="ChEBI" id="CHEBI:29108"/>
        <label>1</label>
        <note>low affinity</note>
    </ligand>
</feature>
<feature type="binding site" evidence="5">
    <location>
        <position position="63"/>
    </location>
    <ligand>
        <name>Ca(2+)</name>
        <dbReference type="ChEBI" id="CHEBI:29108"/>
        <label>2</label>
        <note>high affinity</note>
    </ligand>
</feature>
<feature type="binding site" evidence="5">
    <location>
        <position position="65"/>
    </location>
    <ligand>
        <name>Ca(2+)</name>
        <dbReference type="ChEBI" id="CHEBI:29108"/>
        <label>2</label>
        <note>high affinity</note>
    </ligand>
</feature>
<feature type="binding site" evidence="5">
    <location>
        <position position="67"/>
    </location>
    <ligand>
        <name>Ca(2+)</name>
        <dbReference type="ChEBI" id="CHEBI:29108"/>
        <label>2</label>
        <note>high affinity</note>
    </ligand>
</feature>
<feature type="binding site" evidence="5">
    <location>
        <position position="69"/>
    </location>
    <ligand>
        <name>Ca(2+)</name>
        <dbReference type="ChEBI" id="CHEBI:29108"/>
        <label>2</label>
        <note>high affinity</note>
    </ligand>
</feature>
<feature type="binding site" evidence="5">
    <location>
        <position position="74"/>
    </location>
    <ligand>
        <name>Ca(2+)</name>
        <dbReference type="ChEBI" id="CHEBI:29108"/>
        <label>2</label>
        <note>high affinity</note>
    </ligand>
</feature>
<feature type="modified residue" description="S-nitrosocysteine" evidence="2">
    <location>
        <position position="86"/>
    </location>
</feature>
<gene>
    <name type="primary">S100A1</name>
</gene>
<organism>
    <name type="scientific">Pongo abelii</name>
    <name type="common">Sumatran orangutan</name>
    <name type="synonym">Pongo pygmaeus abelii</name>
    <dbReference type="NCBI Taxonomy" id="9601"/>
    <lineage>
        <taxon>Eukaryota</taxon>
        <taxon>Metazoa</taxon>
        <taxon>Chordata</taxon>
        <taxon>Craniata</taxon>
        <taxon>Vertebrata</taxon>
        <taxon>Euteleostomi</taxon>
        <taxon>Mammalia</taxon>
        <taxon>Eutheria</taxon>
        <taxon>Euarchontoglires</taxon>
        <taxon>Primates</taxon>
        <taxon>Haplorrhini</taxon>
        <taxon>Catarrhini</taxon>
        <taxon>Hominidae</taxon>
        <taxon>Pongo</taxon>
    </lineage>
</organism>
<sequence>MGSELETAMETLINVFHAHSGKEGDKYKLSKKELKELLQTELSGFLDAQKDVDAVDKVMKELDENGDGEVDFQEYVVLVAALTVACNNFFWENS</sequence>
<comment type="function">
    <text evidence="2">Small calcium binding protein that plays important roles in several biological processes such as Ca(2+) homeostasis, chondrocyte biology and cardiomyocyte regulation. In response to an increase in intracellular Ca(2+) levels, binds calcium which triggers conformational changes. These changes allow interactions with specific target proteins and modulate their activity. Regulates a network in cardiomyocytes controlling sarcoplasmic reticulum Ca(2+) cycling and mitochondrial function through interaction with the ryanodine receptors RYR1 and RYR2, sarcoplasmic reticulum Ca(2+)-ATPase/ATP2A2 and mitochondrial F1-ATPase. Facilitates diastolic Ca(2+) dissociation and myofilament mechanics in order to improve relaxation during diastole.</text>
</comment>
<comment type="subunit">
    <text evidence="2 3 4">Dimer of either two alpha chains, or two beta chains, or one alpha and one beta chain. Also forms heterodimers with S100P (By similarity). Interacts with AGER (By similarity). Interacts with CAPZA1 (By similarity). Interacts with FKBP4. Interacts with RYR1 and RYR2. Interacts with CACYBP in a calcium-dependent manner. Interacts with PPP5C (via TPR repeats); the interaction is calcium-dependent and modulates PPP5C activity. Interacts with ATP2A2 and PLN in a Ca(2+)-dependent manner (By similarity). Interacts with mitochondrial F1-ATPase subunits ATP5F1A and ATP5F1B; these interactions increase F1-ATPase activity (By similarity).</text>
</comment>
<comment type="subcellular location">
    <subcellularLocation>
        <location evidence="2">Cytoplasm</location>
    </subcellularLocation>
    <subcellularLocation>
        <location evidence="2">Sarcoplasmic reticulum</location>
    </subcellularLocation>
    <subcellularLocation>
        <location evidence="4">Mitochondrion</location>
    </subcellularLocation>
</comment>
<comment type="PTM">
    <text evidence="2">Glutathionylated; glutathionylation increases affinity to calcium about 10-fold.</text>
</comment>
<comment type="miscellaneous">
    <text evidence="1">Able to bind zinc in vitro; the binding sites are different from the calcium binding sites. The physiological relevance of zinc binding is unclear. Physiological concentrations of potassium antagonize the binding of both divalent cations, especially affecting the high-affinity calcium-binding sites.</text>
</comment>
<comment type="similarity">
    <text evidence="6">Belongs to the S-100 family.</text>
</comment>
<proteinExistence type="inferred from homology"/>
<evidence type="ECO:0000250" key="1">
    <source>
        <dbReference type="UniProtKB" id="P02639"/>
    </source>
</evidence>
<evidence type="ECO:0000250" key="2">
    <source>
        <dbReference type="UniProtKB" id="P23297"/>
    </source>
</evidence>
<evidence type="ECO:0000250" key="3">
    <source>
        <dbReference type="UniProtKB" id="P35467"/>
    </source>
</evidence>
<evidence type="ECO:0000250" key="4">
    <source>
        <dbReference type="UniProtKB" id="P56565"/>
    </source>
</evidence>
<evidence type="ECO:0000255" key="5">
    <source>
        <dbReference type="PROSITE-ProRule" id="PRU00448"/>
    </source>
</evidence>
<evidence type="ECO:0000305" key="6"/>
<reference key="1">
    <citation type="submission" date="2004-11" db="EMBL/GenBank/DDBJ databases">
        <authorList>
            <consortium name="The German cDNA consortium"/>
        </authorList>
    </citation>
    <scope>NUCLEOTIDE SEQUENCE [LARGE SCALE MRNA]</scope>
    <source>
        <tissue>Heart</tissue>
    </source>
</reference>
<accession>Q5RC36</accession>
<keyword id="KW-0106">Calcium</keyword>
<keyword id="KW-0963">Cytoplasm</keyword>
<keyword id="KW-0479">Metal-binding</keyword>
<keyword id="KW-0496">Mitochondrion</keyword>
<keyword id="KW-1185">Reference proteome</keyword>
<keyword id="KW-0677">Repeat</keyword>
<keyword id="KW-0702">S-nitrosylation</keyword>
<keyword id="KW-0703">Sarcoplasmic reticulum</keyword>
<name>S10A1_PONAB</name>